<organism>
    <name type="scientific">Escherichia coli O81 (strain ED1a)</name>
    <dbReference type="NCBI Taxonomy" id="585397"/>
    <lineage>
        <taxon>Bacteria</taxon>
        <taxon>Pseudomonadati</taxon>
        <taxon>Pseudomonadota</taxon>
        <taxon>Gammaproteobacteria</taxon>
        <taxon>Enterobacterales</taxon>
        <taxon>Enterobacteriaceae</taxon>
        <taxon>Escherichia</taxon>
    </lineage>
</organism>
<protein>
    <recommendedName>
        <fullName evidence="1">Cell division protein FtsB</fullName>
    </recommendedName>
</protein>
<feature type="chain" id="PRO_1000147005" description="Cell division protein FtsB">
    <location>
        <begin position="1"/>
        <end position="103"/>
    </location>
</feature>
<feature type="topological domain" description="Cytoplasmic" evidence="1">
    <location>
        <begin position="1"/>
        <end position="3"/>
    </location>
</feature>
<feature type="transmembrane region" description="Helical" evidence="1">
    <location>
        <begin position="4"/>
        <end position="21"/>
    </location>
</feature>
<feature type="topological domain" description="Periplasmic" evidence="1">
    <location>
        <begin position="22"/>
        <end position="103"/>
    </location>
</feature>
<feature type="coiled-coil region" evidence="1">
    <location>
        <begin position="31"/>
        <end position="71"/>
    </location>
</feature>
<proteinExistence type="inferred from homology"/>
<reference key="1">
    <citation type="journal article" date="2009" name="PLoS Genet.">
        <title>Organised genome dynamics in the Escherichia coli species results in highly diverse adaptive paths.</title>
        <authorList>
            <person name="Touchon M."/>
            <person name="Hoede C."/>
            <person name="Tenaillon O."/>
            <person name="Barbe V."/>
            <person name="Baeriswyl S."/>
            <person name="Bidet P."/>
            <person name="Bingen E."/>
            <person name="Bonacorsi S."/>
            <person name="Bouchier C."/>
            <person name="Bouvet O."/>
            <person name="Calteau A."/>
            <person name="Chiapello H."/>
            <person name="Clermont O."/>
            <person name="Cruveiller S."/>
            <person name="Danchin A."/>
            <person name="Diard M."/>
            <person name="Dossat C."/>
            <person name="Karoui M.E."/>
            <person name="Frapy E."/>
            <person name="Garry L."/>
            <person name="Ghigo J.M."/>
            <person name="Gilles A.M."/>
            <person name="Johnson J."/>
            <person name="Le Bouguenec C."/>
            <person name="Lescat M."/>
            <person name="Mangenot S."/>
            <person name="Martinez-Jehanne V."/>
            <person name="Matic I."/>
            <person name="Nassif X."/>
            <person name="Oztas S."/>
            <person name="Petit M.A."/>
            <person name="Pichon C."/>
            <person name="Rouy Z."/>
            <person name="Ruf C.S."/>
            <person name="Schneider D."/>
            <person name="Tourret J."/>
            <person name="Vacherie B."/>
            <person name="Vallenet D."/>
            <person name="Medigue C."/>
            <person name="Rocha E.P.C."/>
            <person name="Denamur E."/>
        </authorList>
    </citation>
    <scope>NUCLEOTIDE SEQUENCE [LARGE SCALE GENOMIC DNA]</scope>
    <source>
        <strain>ED1a</strain>
    </source>
</reference>
<comment type="function">
    <text evidence="1">Essential cell division protein. May link together the upstream cell division proteins, which are predominantly cytoplasmic, with the downstream cell division proteins, which are predominantly periplasmic.</text>
</comment>
<comment type="subunit">
    <text evidence="1">Part of a complex composed of FtsB, FtsL and FtsQ.</text>
</comment>
<comment type="subcellular location">
    <subcellularLocation>
        <location evidence="1">Cell inner membrane</location>
        <topology evidence="1">Single-pass type II membrane protein</topology>
    </subcellularLocation>
    <text evidence="1">Localizes to the division septum.</text>
</comment>
<comment type="similarity">
    <text evidence="1">Belongs to the FtsB family.</text>
</comment>
<dbReference type="EMBL" id="CU928162">
    <property type="protein sequence ID" value="CAR09366.2"/>
    <property type="molecule type" value="Genomic_DNA"/>
</dbReference>
<dbReference type="RefSeq" id="WP_000517479.1">
    <property type="nucleotide sequence ID" value="NC_011745.1"/>
</dbReference>
<dbReference type="SMR" id="B7MZ49"/>
<dbReference type="GeneID" id="89517564"/>
<dbReference type="KEGG" id="ecq:ECED1_3204"/>
<dbReference type="HOGENOM" id="CLU_134863_5_2_6"/>
<dbReference type="Proteomes" id="UP000000748">
    <property type="component" value="Chromosome"/>
</dbReference>
<dbReference type="GO" id="GO:0032153">
    <property type="term" value="C:cell division site"/>
    <property type="evidence" value="ECO:0007669"/>
    <property type="project" value="UniProtKB-UniRule"/>
</dbReference>
<dbReference type="GO" id="GO:0030428">
    <property type="term" value="C:cell septum"/>
    <property type="evidence" value="ECO:0007669"/>
    <property type="project" value="TreeGrafter"/>
</dbReference>
<dbReference type="GO" id="GO:0005886">
    <property type="term" value="C:plasma membrane"/>
    <property type="evidence" value="ECO:0007669"/>
    <property type="project" value="UniProtKB-SubCell"/>
</dbReference>
<dbReference type="GO" id="GO:0043093">
    <property type="term" value="P:FtsZ-dependent cytokinesis"/>
    <property type="evidence" value="ECO:0007669"/>
    <property type="project" value="UniProtKB-UniRule"/>
</dbReference>
<dbReference type="FunFam" id="1.20.5.400:FF:000001">
    <property type="entry name" value="Cell division protein FtsB"/>
    <property type="match status" value="1"/>
</dbReference>
<dbReference type="Gene3D" id="1.20.5.400">
    <property type="match status" value="1"/>
</dbReference>
<dbReference type="HAMAP" id="MF_00599">
    <property type="entry name" value="FtsB"/>
    <property type="match status" value="1"/>
</dbReference>
<dbReference type="InterPro" id="IPR023081">
    <property type="entry name" value="Cell_div_FtsB"/>
</dbReference>
<dbReference type="InterPro" id="IPR007060">
    <property type="entry name" value="FtsL/DivIC"/>
</dbReference>
<dbReference type="NCBIfam" id="NF002058">
    <property type="entry name" value="PRK00888.1"/>
    <property type="match status" value="1"/>
</dbReference>
<dbReference type="PANTHER" id="PTHR37485">
    <property type="entry name" value="CELL DIVISION PROTEIN FTSB"/>
    <property type="match status" value="1"/>
</dbReference>
<dbReference type="PANTHER" id="PTHR37485:SF1">
    <property type="entry name" value="CELL DIVISION PROTEIN FTSB"/>
    <property type="match status" value="1"/>
</dbReference>
<dbReference type="Pfam" id="PF04977">
    <property type="entry name" value="DivIC"/>
    <property type="match status" value="1"/>
</dbReference>
<sequence length="103" mass="11621">MGKLTLLLLAILVWLQYSLWFGKNGIHDYTRVNNDVAAQQATNAKLKARNDQLFAEIDDLNGGQEALEERARNELSMTRPGETFYRLVPDASKRAQSAGQNNR</sequence>
<keyword id="KW-0131">Cell cycle</keyword>
<keyword id="KW-0132">Cell division</keyword>
<keyword id="KW-0997">Cell inner membrane</keyword>
<keyword id="KW-1003">Cell membrane</keyword>
<keyword id="KW-0175">Coiled coil</keyword>
<keyword id="KW-0472">Membrane</keyword>
<keyword id="KW-0812">Transmembrane</keyword>
<keyword id="KW-1133">Transmembrane helix</keyword>
<evidence type="ECO:0000255" key="1">
    <source>
        <dbReference type="HAMAP-Rule" id="MF_00599"/>
    </source>
</evidence>
<name>FTSB_ECO81</name>
<gene>
    <name evidence="1" type="primary">ftsB</name>
    <name type="ordered locus">ECED1_3204</name>
</gene>
<accession>B7MZ49</accession>